<reference key="1">
    <citation type="journal article" date="2001" name="Lancet">
        <title>Whole genome sequencing of meticillin-resistant Staphylococcus aureus.</title>
        <authorList>
            <person name="Kuroda M."/>
            <person name="Ohta T."/>
            <person name="Uchiyama I."/>
            <person name="Baba T."/>
            <person name="Yuzawa H."/>
            <person name="Kobayashi I."/>
            <person name="Cui L."/>
            <person name="Oguchi A."/>
            <person name="Aoki K."/>
            <person name="Nagai Y."/>
            <person name="Lian J.-Q."/>
            <person name="Ito T."/>
            <person name="Kanamori M."/>
            <person name="Matsumaru H."/>
            <person name="Maruyama A."/>
            <person name="Murakami H."/>
            <person name="Hosoyama A."/>
            <person name="Mizutani-Ui Y."/>
            <person name="Takahashi N.K."/>
            <person name="Sawano T."/>
            <person name="Inoue R."/>
            <person name="Kaito C."/>
            <person name="Sekimizu K."/>
            <person name="Hirakawa H."/>
            <person name="Kuhara S."/>
            <person name="Goto S."/>
            <person name="Yabuzaki J."/>
            <person name="Kanehisa M."/>
            <person name="Yamashita A."/>
            <person name="Oshima K."/>
            <person name="Furuya K."/>
            <person name="Yoshino C."/>
            <person name="Shiba T."/>
            <person name="Hattori M."/>
            <person name="Ogasawara N."/>
            <person name="Hayashi H."/>
            <person name="Hiramatsu K."/>
        </authorList>
    </citation>
    <scope>NUCLEOTIDE SEQUENCE [LARGE SCALE GENOMIC DNA]</scope>
    <source>
        <strain>Mu50 / ATCC 700699</strain>
    </source>
</reference>
<reference key="2">
    <citation type="journal article" date="2004" name="DNA Res.">
        <title>Nucleotide substitutions in Staphylococcus aureus strains, Mu50, Mu3, and N315.</title>
        <authorList>
            <person name="Ohta T."/>
            <person name="Hirakawa H."/>
            <person name="Morikawa K."/>
            <person name="Maruyama A."/>
            <person name="Inose Y."/>
            <person name="Yamashita A."/>
            <person name="Oshima K."/>
            <person name="Kuroda M."/>
            <person name="Hattori M."/>
            <person name="Hiramatsu K."/>
            <person name="Kuhara S."/>
            <person name="Hayashi H."/>
        </authorList>
    </citation>
    <scope>SEQUENCE REVISION</scope>
</reference>
<dbReference type="EMBL" id="BA000017">
    <property type="protein sequence ID" value="BAB57457.2"/>
    <property type="molecule type" value="Genomic_DNA"/>
</dbReference>
<dbReference type="RefSeq" id="WP_000073352.1">
    <property type="nucleotide sequence ID" value="NC_002758.2"/>
</dbReference>
<dbReference type="SMR" id="Q931S8"/>
<dbReference type="KEGG" id="sav:SAV1295"/>
<dbReference type="HOGENOM" id="CLU_002472_4_0_9"/>
<dbReference type="PhylomeDB" id="Q931S8"/>
<dbReference type="Proteomes" id="UP000002481">
    <property type="component" value="Chromosome"/>
</dbReference>
<dbReference type="GO" id="GO:0005829">
    <property type="term" value="C:cytosol"/>
    <property type="evidence" value="ECO:0007669"/>
    <property type="project" value="TreeGrafter"/>
</dbReference>
<dbReference type="GO" id="GO:0005524">
    <property type="term" value="F:ATP binding"/>
    <property type="evidence" value="ECO:0007669"/>
    <property type="project" value="UniProtKB-UniRule"/>
</dbReference>
<dbReference type="GO" id="GO:0140664">
    <property type="term" value="F:ATP-dependent DNA damage sensor activity"/>
    <property type="evidence" value="ECO:0007669"/>
    <property type="project" value="InterPro"/>
</dbReference>
<dbReference type="GO" id="GO:0003684">
    <property type="term" value="F:damaged DNA binding"/>
    <property type="evidence" value="ECO:0007669"/>
    <property type="project" value="UniProtKB-UniRule"/>
</dbReference>
<dbReference type="GO" id="GO:0030983">
    <property type="term" value="F:mismatched DNA binding"/>
    <property type="evidence" value="ECO:0007669"/>
    <property type="project" value="InterPro"/>
</dbReference>
<dbReference type="GO" id="GO:0006298">
    <property type="term" value="P:mismatch repair"/>
    <property type="evidence" value="ECO:0007669"/>
    <property type="project" value="UniProtKB-UniRule"/>
</dbReference>
<dbReference type="CDD" id="cd03284">
    <property type="entry name" value="ABC_MutS1"/>
    <property type="match status" value="1"/>
</dbReference>
<dbReference type="FunFam" id="1.10.1420.10:FF:000007">
    <property type="entry name" value="DNA mismatch repair protein MutS"/>
    <property type="match status" value="1"/>
</dbReference>
<dbReference type="FunFam" id="3.40.1170.10:FF:000001">
    <property type="entry name" value="DNA mismatch repair protein MutS"/>
    <property type="match status" value="1"/>
</dbReference>
<dbReference type="FunFam" id="3.40.50.300:FF:000896">
    <property type="entry name" value="DNA mismatch repair protein MutS"/>
    <property type="match status" value="1"/>
</dbReference>
<dbReference type="Gene3D" id="1.10.1420.10">
    <property type="match status" value="2"/>
</dbReference>
<dbReference type="Gene3D" id="3.40.1170.10">
    <property type="entry name" value="DNA repair protein MutS, domain I"/>
    <property type="match status" value="1"/>
</dbReference>
<dbReference type="Gene3D" id="3.30.420.110">
    <property type="entry name" value="MutS, connector domain"/>
    <property type="match status" value="1"/>
</dbReference>
<dbReference type="Gene3D" id="3.40.50.300">
    <property type="entry name" value="P-loop containing nucleotide triphosphate hydrolases"/>
    <property type="match status" value="1"/>
</dbReference>
<dbReference type="HAMAP" id="MF_00096">
    <property type="entry name" value="MutS"/>
    <property type="match status" value="1"/>
</dbReference>
<dbReference type="InterPro" id="IPR005748">
    <property type="entry name" value="DNA_mismatch_repair_MutS"/>
</dbReference>
<dbReference type="InterPro" id="IPR007695">
    <property type="entry name" value="DNA_mismatch_repair_MutS-lik_N"/>
</dbReference>
<dbReference type="InterPro" id="IPR017261">
    <property type="entry name" value="DNA_mismatch_repair_MutS/MSH"/>
</dbReference>
<dbReference type="InterPro" id="IPR000432">
    <property type="entry name" value="DNA_mismatch_repair_MutS_C"/>
</dbReference>
<dbReference type="InterPro" id="IPR007861">
    <property type="entry name" value="DNA_mismatch_repair_MutS_clamp"/>
</dbReference>
<dbReference type="InterPro" id="IPR007696">
    <property type="entry name" value="DNA_mismatch_repair_MutS_core"/>
</dbReference>
<dbReference type="InterPro" id="IPR016151">
    <property type="entry name" value="DNA_mismatch_repair_MutS_N"/>
</dbReference>
<dbReference type="InterPro" id="IPR036187">
    <property type="entry name" value="DNA_mismatch_repair_MutS_sf"/>
</dbReference>
<dbReference type="InterPro" id="IPR007860">
    <property type="entry name" value="DNA_mmatch_repair_MutS_con_dom"/>
</dbReference>
<dbReference type="InterPro" id="IPR045076">
    <property type="entry name" value="MutS"/>
</dbReference>
<dbReference type="InterPro" id="IPR036678">
    <property type="entry name" value="MutS_con_dom_sf"/>
</dbReference>
<dbReference type="InterPro" id="IPR027417">
    <property type="entry name" value="P-loop_NTPase"/>
</dbReference>
<dbReference type="NCBIfam" id="TIGR01070">
    <property type="entry name" value="mutS1"/>
    <property type="match status" value="1"/>
</dbReference>
<dbReference type="NCBIfam" id="NF003810">
    <property type="entry name" value="PRK05399.1"/>
    <property type="match status" value="1"/>
</dbReference>
<dbReference type="PANTHER" id="PTHR11361:SF34">
    <property type="entry name" value="DNA MISMATCH REPAIR PROTEIN MSH1, MITOCHONDRIAL"/>
    <property type="match status" value="1"/>
</dbReference>
<dbReference type="PANTHER" id="PTHR11361">
    <property type="entry name" value="DNA MISMATCH REPAIR PROTEIN MUTS FAMILY MEMBER"/>
    <property type="match status" value="1"/>
</dbReference>
<dbReference type="Pfam" id="PF01624">
    <property type="entry name" value="MutS_I"/>
    <property type="match status" value="1"/>
</dbReference>
<dbReference type="Pfam" id="PF05188">
    <property type="entry name" value="MutS_II"/>
    <property type="match status" value="1"/>
</dbReference>
<dbReference type="Pfam" id="PF05192">
    <property type="entry name" value="MutS_III"/>
    <property type="match status" value="1"/>
</dbReference>
<dbReference type="Pfam" id="PF05190">
    <property type="entry name" value="MutS_IV"/>
    <property type="match status" value="1"/>
</dbReference>
<dbReference type="Pfam" id="PF00488">
    <property type="entry name" value="MutS_V"/>
    <property type="match status" value="1"/>
</dbReference>
<dbReference type="PIRSF" id="PIRSF037677">
    <property type="entry name" value="DNA_mis_repair_Msh6"/>
    <property type="match status" value="1"/>
</dbReference>
<dbReference type="SMART" id="SM00534">
    <property type="entry name" value="MUTSac"/>
    <property type="match status" value="1"/>
</dbReference>
<dbReference type="SMART" id="SM00533">
    <property type="entry name" value="MUTSd"/>
    <property type="match status" value="1"/>
</dbReference>
<dbReference type="SUPFAM" id="SSF55271">
    <property type="entry name" value="DNA repair protein MutS, domain I"/>
    <property type="match status" value="1"/>
</dbReference>
<dbReference type="SUPFAM" id="SSF53150">
    <property type="entry name" value="DNA repair protein MutS, domain II"/>
    <property type="match status" value="1"/>
</dbReference>
<dbReference type="SUPFAM" id="SSF48334">
    <property type="entry name" value="DNA repair protein MutS, domain III"/>
    <property type="match status" value="1"/>
</dbReference>
<dbReference type="SUPFAM" id="SSF52540">
    <property type="entry name" value="P-loop containing nucleoside triphosphate hydrolases"/>
    <property type="match status" value="1"/>
</dbReference>
<dbReference type="PROSITE" id="PS00486">
    <property type="entry name" value="DNA_MISMATCH_REPAIR_2"/>
    <property type="match status" value="1"/>
</dbReference>
<gene>
    <name evidence="1" type="primary">mutS</name>
    <name type="ordered locus">SAV1295</name>
</gene>
<sequence length="872" mass="99904">MSNVTPMMQQYLKIKSEYQDCLLFFRLGDFYEMFYEDAKEASRVLEITLTKRDAKKENPIPMCGVPYHSADSYIDTLVNNGYKVAICEQMEDPKQTKGMVRREVVRIVTPGTVMEQGGVDDKQNNYILSFVMNQPEIALSYCDVSTGELKVTHFNDEATLLNEITTINPNEVVINDNISDNLKRQINMVTETITVRETLSSEIYSVNQTEHKLMYQATQLLLDYIHHTQKRDLSHIEDVVQYAAIDYMKMDFYAKRNLELTESIRLKSKKGTLLWLMDETKTPMGARRLKQWIDRPLISKEQIEARLDIVDEFSAHFIERDTLRTYLNQVYDIERLVGRVSYGNVNARDLIQLKHSISEIPNIKALLNSMNQNTLVQVNQLEPLDDLLDILEQSLVEEPPISVKDGGLFKVGFNTQLDEYLEASKNGKTWLAELQAKERQRTGIKSLKISFNKVFGYFIEITRANLQNFEPSEFGYMRKQTLSNAERFITDELKEKEDIILGAEDKAIELEYQLFVQLREEVKKYTERLQQQAKIISELDCLQSFAEIAQKYNYTRPSFSENKTLELVESRHPVVERVMDYNDYVPNNCRLDNETFIYLITGPNMSGKSTYMRQVAIISIMAQMGAYVPCKEAVLPIFDQIFTRIGAADDLVSGKSTFMVEMLEAQKALTYATEDSLIIFDEIGRGTSTYDGLALAQAMIEYVAETSHAKTLFSTHYHELTTLDQALPSLKNVHVAANEYKGELIFLHKVKDGAVDDSYGIQVAKLADLPEKVISRAQVILSEFEASAGKKSSISNLKMVENEPEINQENLNLSVEETTDTLSQKDFEQASFDLFENDQESEIELQIKNLNLSNMTPIEALVKLSELQNQLK</sequence>
<organism>
    <name type="scientific">Staphylococcus aureus (strain Mu50 / ATCC 700699)</name>
    <dbReference type="NCBI Taxonomy" id="158878"/>
    <lineage>
        <taxon>Bacteria</taxon>
        <taxon>Bacillati</taxon>
        <taxon>Bacillota</taxon>
        <taxon>Bacilli</taxon>
        <taxon>Bacillales</taxon>
        <taxon>Staphylococcaceae</taxon>
        <taxon>Staphylococcus</taxon>
    </lineage>
</organism>
<protein>
    <recommendedName>
        <fullName evidence="1">DNA mismatch repair protein MutS</fullName>
    </recommendedName>
</protein>
<name>MUTS_STAAM</name>
<comment type="function">
    <text evidence="1">This protein is involved in the repair of mismatches in DNA. It is possible that it carries out the mismatch recognition step. This protein has a weak ATPase activity.</text>
</comment>
<comment type="similarity">
    <text evidence="1">Belongs to the DNA mismatch repair MutS family.</text>
</comment>
<evidence type="ECO:0000255" key="1">
    <source>
        <dbReference type="HAMAP-Rule" id="MF_00096"/>
    </source>
</evidence>
<accession>Q931S8</accession>
<accession>Q931S9</accession>
<proteinExistence type="inferred from homology"/>
<feature type="chain" id="PRO_0000115140" description="DNA mismatch repair protein MutS">
    <location>
        <begin position="1"/>
        <end position="872"/>
    </location>
</feature>
<feature type="binding site" evidence="1">
    <location>
        <begin position="602"/>
        <end position="609"/>
    </location>
    <ligand>
        <name>ATP</name>
        <dbReference type="ChEBI" id="CHEBI:30616"/>
    </ligand>
</feature>
<keyword id="KW-0067">ATP-binding</keyword>
<keyword id="KW-0227">DNA damage</keyword>
<keyword id="KW-0234">DNA repair</keyword>
<keyword id="KW-0238">DNA-binding</keyword>
<keyword id="KW-0547">Nucleotide-binding</keyword>